<gene>
    <name evidence="1" type="primary">pnp</name>
    <name type="ordered locus">Tfu_0784</name>
</gene>
<accession>Q47RU5</accession>
<organism>
    <name type="scientific">Thermobifida fusca (strain YX)</name>
    <dbReference type="NCBI Taxonomy" id="269800"/>
    <lineage>
        <taxon>Bacteria</taxon>
        <taxon>Bacillati</taxon>
        <taxon>Actinomycetota</taxon>
        <taxon>Actinomycetes</taxon>
        <taxon>Streptosporangiales</taxon>
        <taxon>Nocardiopsidaceae</taxon>
        <taxon>Thermobifida</taxon>
    </lineage>
</organism>
<name>PNP_THEFY</name>
<proteinExistence type="inferred from homology"/>
<feature type="chain" id="PRO_0000329910" description="Polyribonucleotide nucleotidyltransferase">
    <location>
        <begin position="1"/>
        <end position="767"/>
    </location>
</feature>
<feature type="domain" description="KH" evidence="1">
    <location>
        <begin position="575"/>
        <end position="634"/>
    </location>
</feature>
<feature type="domain" description="S1 motif" evidence="1">
    <location>
        <begin position="646"/>
        <end position="718"/>
    </location>
</feature>
<feature type="region of interest" description="Disordered" evidence="2">
    <location>
        <begin position="725"/>
        <end position="767"/>
    </location>
</feature>
<feature type="compositionally biased region" description="Basic residues" evidence="2">
    <location>
        <begin position="750"/>
        <end position="759"/>
    </location>
</feature>
<feature type="binding site" evidence="1">
    <location>
        <position position="509"/>
    </location>
    <ligand>
        <name>Mg(2+)</name>
        <dbReference type="ChEBI" id="CHEBI:18420"/>
    </ligand>
</feature>
<feature type="binding site" evidence="1">
    <location>
        <position position="515"/>
    </location>
    <ligand>
        <name>Mg(2+)</name>
        <dbReference type="ChEBI" id="CHEBI:18420"/>
    </ligand>
</feature>
<protein>
    <recommendedName>
        <fullName evidence="1">Polyribonucleotide nucleotidyltransferase</fullName>
        <ecNumber evidence="1">2.7.7.8</ecNumber>
    </recommendedName>
    <alternativeName>
        <fullName evidence="1">Polynucleotide phosphorylase</fullName>
        <shortName evidence="1">PNPase</shortName>
    </alternativeName>
</protein>
<reference key="1">
    <citation type="journal article" date="2007" name="J. Bacteriol.">
        <title>Genome sequence and analysis of the soil cellulolytic actinomycete Thermobifida fusca YX.</title>
        <authorList>
            <person name="Lykidis A."/>
            <person name="Mavromatis K."/>
            <person name="Ivanova N."/>
            <person name="Anderson I."/>
            <person name="Land M."/>
            <person name="DiBartolo G."/>
            <person name="Martinez M."/>
            <person name="Lapidus A."/>
            <person name="Lucas S."/>
            <person name="Copeland A."/>
            <person name="Richardson P."/>
            <person name="Wilson D.B."/>
            <person name="Kyrpides N."/>
        </authorList>
    </citation>
    <scope>NUCLEOTIDE SEQUENCE [LARGE SCALE GENOMIC DNA]</scope>
    <source>
        <strain>YX</strain>
    </source>
</reference>
<dbReference type="EC" id="2.7.7.8" evidence="1"/>
<dbReference type="EMBL" id="CP000088">
    <property type="protein sequence ID" value="AAZ54822.1"/>
    <property type="molecule type" value="Genomic_DNA"/>
</dbReference>
<dbReference type="RefSeq" id="WP_011291231.1">
    <property type="nucleotide sequence ID" value="NC_007333.1"/>
</dbReference>
<dbReference type="SMR" id="Q47RU5"/>
<dbReference type="STRING" id="269800.Tfu_0784"/>
<dbReference type="KEGG" id="tfu:Tfu_0784"/>
<dbReference type="eggNOG" id="COG1185">
    <property type="taxonomic scope" value="Bacteria"/>
</dbReference>
<dbReference type="HOGENOM" id="CLU_004217_2_2_11"/>
<dbReference type="OrthoDB" id="9804305at2"/>
<dbReference type="GO" id="GO:0005829">
    <property type="term" value="C:cytosol"/>
    <property type="evidence" value="ECO:0007669"/>
    <property type="project" value="TreeGrafter"/>
</dbReference>
<dbReference type="GO" id="GO:0000175">
    <property type="term" value="F:3'-5'-RNA exonuclease activity"/>
    <property type="evidence" value="ECO:0007669"/>
    <property type="project" value="TreeGrafter"/>
</dbReference>
<dbReference type="GO" id="GO:0000287">
    <property type="term" value="F:magnesium ion binding"/>
    <property type="evidence" value="ECO:0007669"/>
    <property type="project" value="UniProtKB-UniRule"/>
</dbReference>
<dbReference type="GO" id="GO:0004654">
    <property type="term" value="F:polyribonucleotide nucleotidyltransferase activity"/>
    <property type="evidence" value="ECO:0007669"/>
    <property type="project" value="UniProtKB-UniRule"/>
</dbReference>
<dbReference type="GO" id="GO:0003723">
    <property type="term" value="F:RNA binding"/>
    <property type="evidence" value="ECO:0007669"/>
    <property type="project" value="UniProtKB-UniRule"/>
</dbReference>
<dbReference type="GO" id="GO:0006402">
    <property type="term" value="P:mRNA catabolic process"/>
    <property type="evidence" value="ECO:0007669"/>
    <property type="project" value="UniProtKB-UniRule"/>
</dbReference>
<dbReference type="GO" id="GO:0006396">
    <property type="term" value="P:RNA processing"/>
    <property type="evidence" value="ECO:0007669"/>
    <property type="project" value="InterPro"/>
</dbReference>
<dbReference type="CDD" id="cd02393">
    <property type="entry name" value="KH-I_PNPase"/>
    <property type="match status" value="1"/>
</dbReference>
<dbReference type="CDD" id="cd11364">
    <property type="entry name" value="RNase_PH_PNPase_2"/>
    <property type="match status" value="1"/>
</dbReference>
<dbReference type="CDD" id="cd04472">
    <property type="entry name" value="S1_PNPase"/>
    <property type="match status" value="1"/>
</dbReference>
<dbReference type="FunFam" id="2.40.50.140:FF:000069">
    <property type="entry name" value="Polyribonucleotide nucleotidyltransferase"/>
    <property type="match status" value="1"/>
</dbReference>
<dbReference type="FunFam" id="3.30.1370.10:FF:000001">
    <property type="entry name" value="Polyribonucleotide nucleotidyltransferase"/>
    <property type="match status" value="1"/>
</dbReference>
<dbReference type="FunFam" id="3.30.230.70:FF:000001">
    <property type="entry name" value="Polyribonucleotide nucleotidyltransferase"/>
    <property type="match status" value="1"/>
</dbReference>
<dbReference type="FunFam" id="3.30.230.70:FF:000002">
    <property type="entry name" value="Polyribonucleotide nucleotidyltransferase"/>
    <property type="match status" value="1"/>
</dbReference>
<dbReference type="Gene3D" id="3.30.230.70">
    <property type="entry name" value="GHMP Kinase, N-terminal domain"/>
    <property type="match status" value="2"/>
</dbReference>
<dbReference type="Gene3D" id="3.30.1370.10">
    <property type="entry name" value="K Homology domain, type 1"/>
    <property type="match status" value="1"/>
</dbReference>
<dbReference type="Gene3D" id="2.40.50.140">
    <property type="entry name" value="Nucleic acid-binding proteins"/>
    <property type="match status" value="1"/>
</dbReference>
<dbReference type="HAMAP" id="MF_01595">
    <property type="entry name" value="PNPase"/>
    <property type="match status" value="1"/>
</dbReference>
<dbReference type="InterPro" id="IPR001247">
    <property type="entry name" value="ExoRNase_PH_dom1"/>
</dbReference>
<dbReference type="InterPro" id="IPR015847">
    <property type="entry name" value="ExoRNase_PH_dom2"/>
</dbReference>
<dbReference type="InterPro" id="IPR036345">
    <property type="entry name" value="ExoRNase_PH_dom2_sf"/>
</dbReference>
<dbReference type="InterPro" id="IPR014069">
    <property type="entry name" value="GPSI/PNP"/>
</dbReference>
<dbReference type="InterPro" id="IPR004087">
    <property type="entry name" value="KH_dom"/>
</dbReference>
<dbReference type="InterPro" id="IPR004088">
    <property type="entry name" value="KH_dom_type_1"/>
</dbReference>
<dbReference type="InterPro" id="IPR036612">
    <property type="entry name" value="KH_dom_type_1_sf"/>
</dbReference>
<dbReference type="InterPro" id="IPR012340">
    <property type="entry name" value="NA-bd_OB-fold"/>
</dbReference>
<dbReference type="InterPro" id="IPR012162">
    <property type="entry name" value="PNPase"/>
</dbReference>
<dbReference type="InterPro" id="IPR027408">
    <property type="entry name" value="PNPase/RNase_PH_dom_sf"/>
</dbReference>
<dbReference type="InterPro" id="IPR015848">
    <property type="entry name" value="PNPase_PH_RNA-bd_bac/org-type"/>
</dbReference>
<dbReference type="InterPro" id="IPR036456">
    <property type="entry name" value="PNPase_PH_RNA-bd_sf"/>
</dbReference>
<dbReference type="InterPro" id="IPR020568">
    <property type="entry name" value="Ribosomal_Su5_D2-typ_SF"/>
</dbReference>
<dbReference type="InterPro" id="IPR003029">
    <property type="entry name" value="S1_domain"/>
</dbReference>
<dbReference type="NCBIfam" id="TIGR03591">
    <property type="entry name" value="polynuc_phos"/>
    <property type="match status" value="1"/>
</dbReference>
<dbReference type="NCBIfam" id="TIGR02696">
    <property type="entry name" value="pppGpp_PNP"/>
    <property type="match status" value="1"/>
</dbReference>
<dbReference type="NCBIfam" id="NF008805">
    <property type="entry name" value="PRK11824.1"/>
    <property type="match status" value="1"/>
</dbReference>
<dbReference type="PANTHER" id="PTHR11252">
    <property type="entry name" value="POLYRIBONUCLEOTIDE NUCLEOTIDYLTRANSFERASE"/>
    <property type="match status" value="1"/>
</dbReference>
<dbReference type="PANTHER" id="PTHR11252:SF0">
    <property type="entry name" value="POLYRIBONUCLEOTIDE NUCLEOTIDYLTRANSFERASE 1, MITOCHONDRIAL"/>
    <property type="match status" value="1"/>
</dbReference>
<dbReference type="Pfam" id="PF00013">
    <property type="entry name" value="KH_1"/>
    <property type="match status" value="1"/>
</dbReference>
<dbReference type="Pfam" id="PF03726">
    <property type="entry name" value="PNPase"/>
    <property type="match status" value="1"/>
</dbReference>
<dbReference type="Pfam" id="PF01138">
    <property type="entry name" value="RNase_PH"/>
    <property type="match status" value="2"/>
</dbReference>
<dbReference type="Pfam" id="PF03725">
    <property type="entry name" value="RNase_PH_C"/>
    <property type="match status" value="1"/>
</dbReference>
<dbReference type="Pfam" id="PF00575">
    <property type="entry name" value="S1"/>
    <property type="match status" value="1"/>
</dbReference>
<dbReference type="PIRSF" id="PIRSF005499">
    <property type="entry name" value="PNPase"/>
    <property type="match status" value="1"/>
</dbReference>
<dbReference type="SMART" id="SM00322">
    <property type="entry name" value="KH"/>
    <property type="match status" value="1"/>
</dbReference>
<dbReference type="SMART" id="SM00316">
    <property type="entry name" value="S1"/>
    <property type="match status" value="1"/>
</dbReference>
<dbReference type="SUPFAM" id="SSF54791">
    <property type="entry name" value="Eukaryotic type KH-domain (KH-domain type I)"/>
    <property type="match status" value="1"/>
</dbReference>
<dbReference type="SUPFAM" id="SSF46915">
    <property type="entry name" value="Polynucleotide phosphorylase/guanosine pentaphosphate synthase (PNPase/GPSI), domain 3"/>
    <property type="match status" value="1"/>
</dbReference>
<dbReference type="SUPFAM" id="SSF55666">
    <property type="entry name" value="Ribonuclease PH domain 2-like"/>
    <property type="match status" value="2"/>
</dbReference>
<dbReference type="SUPFAM" id="SSF54211">
    <property type="entry name" value="Ribosomal protein S5 domain 2-like"/>
    <property type="match status" value="2"/>
</dbReference>
<dbReference type="PROSITE" id="PS50084">
    <property type="entry name" value="KH_TYPE_1"/>
    <property type="match status" value="1"/>
</dbReference>
<dbReference type="PROSITE" id="PS50126">
    <property type="entry name" value="S1"/>
    <property type="match status" value="1"/>
</dbReference>
<comment type="function">
    <text evidence="1">Involved in mRNA degradation. Catalyzes the phosphorolysis of single-stranded polyribonucleotides processively in the 3'- to 5'-direction.</text>
</comment>
<comment type="catalytic activity">
    <reaction evidence="1">
        <text>RNA(n+1) + phosphate = RNA(n) + a ribonucleoside 5'-diphosphate</text>
        <dbReference type="Rhea" id="RHEA:22096"/>
        <dbReference type="Rhea" id="RHEA-COMP:14527"/>
        <dbReference type="Rhea" id="RHEA-COMP:17342"/>
        <dbReference type="ChEBI" id="CHEBI:43474"/>
        <dbReference type="ChEBI" id="CHEBI:57930"/>
        <dbReference type="ChEBI" id="CHEBI:140395"/>
        <dbReference type="EC" id="2.7.7.8"/>
    </reaction>
</comment>
<comment type="cofactor">
    <cofactor evidence="1">
        <name>Mg(2+)</name>
        <dbReference type="ChEBI" id="CHEBI:18420"/>
    </cofactor>
</comment>
<comment type="subcellular location">
    <subcellularLocation>
        <location evidence="1">Cytoplasm</location>
    </subcellularLocation>
</comment>
<comment type="similarity">
    <text evidence="1">Belongs to the polyribonucleotide nucleotidyltransferase family.</text>
</comment>
<keyword id="KW-0963">Cytoplasm</keyword>
<keyword id="KW-0460">Magnesium</keyword>
<keyword id="KW-0479">Metal-binding</keyword>
<keyword id="KW-0548">Nucleotidyltransferase</keyword>
<keyword id="KW-0694">RNA-binding</keyword>
<keyword id="KW-0808">Transferase</keyword>
<sequence>MEGVYSAEAVIDNGRFGTRTIRFETGRLARQATGSATAYLDDETMVLSATTVSKRPKEALDFFPLTVDVEERMYAAGRIPGSFFRREGRPSEDAILTCRLIDRPLRPSFQKGLRNEIQIVATVLALHPDHLYDVIAINAASMSTQLAGLPFSGPIGGVRVALVEGQWVAFPTHSELANATFDMVVAGRVLDNGDVAIMMVEAESTPHTLRLVAEGAIGPNEQTVAEGLEAAKPFIKVLCRAQQTVAEAAGKPPGEYPIFIDYQDDAYAAVEEAIHDELAAALTIADKQEREAELDRVKALVAEKLAEDFEGREKELAAAFRALTRKLVRERIVKDGVRIDGRGVKDIRSLTAEVNVIPRVHGSALFERGETQILGITTLNMLRMEQTIDTLNPERTKRYMHNYNFPPYSTGETGRVGAPKRREIGHGALAERALVPVLPSREEFPYAIRQVSEAIGSNGSTSMGSVCASTMSLMAAGVPLKDMVAGIAMGLIYEDGKYVTLTDILGAEDAYGDMDFKVAGTRDLITALQLDTKLDGIPAEVLASALQQARGARLAILDVMSEAINRPAEISPHAPRILTVKVPIDKIGEVIGPKGKMINSIQDETGAEITIEDDGTIYIGATDGPSAEAARDAINSIANPTMPEVGERYLGTVVKTTAFGAFVSLLPGKDGLLHISQIRKMHGGQRIENVEDVISIGEKIHVEVRDIDERGKLSLVPVEVIEAEAVAAPNGGESPNGAKKTDASGNGAKQPRRRRRTRSSSRSSENT</sequence>
<evidence type="ECO:0000255" key="1">
    <source>
        <dbReference type="HAMAP-Rule" id="MF_01595"/>
    </source>
</evidence>
<evidence type="ECO:0000256" key="2">
    <source>
        <dbReference type="SAM" id="MobiDB-lite"/>
    </source>
</evidence>